<protein>
    <recommendedName>
        <fullName evidence="1">Large ribosomal subunit protein uL11</fullName>
    </recommendedName>
    <alternativeName>
        <fullName evidence="2">50S ribosomal protein L11</fullName>
    </alternativeName>
</protein>
<name>RL11_TOLAT</name>
<reference key="1">
    <citation type="submission" date="2009-05" db="EMBL/GenBank/DDBJ databases">
        <title>Complete sequence of Tolumonas auensis DSM 9187.</title>
        <authorList>
            <consortium name="US DOE Joint Genome Institute"/>
            <person name="Lucas S."/>
            <person name="Copeland A."/>
            <person name="Lapidus A."/>
            <person name="Glavina del Rio T."/>
            <person name="Tice H."/>
            <person name="Bruce D."/>
            <person name="Goodwin L."/>
            <person name="Pitluck S."/>
            <person name="Chertkov O."/>
            <person name="Brettin T."/>
            <person name="Detter J.C."/>
            <person name="Han C."/>
            <person name="Larimer F."/>
            <person name="Land M."/>
            <person name="Hauser L."/>
            <person name="Kyrpides N."/>
            <person name="Mikhailova N."/>
            <person name="Spring S."/>
            <person name="Beller H."/>
        </authorList>
    </citation>
    <scope>NUCLEOTIDE SEQUENCE [LARGE SCALE GENOMIC DNA]</scope>
    <source>
        <strain>DSM 9187 / NBRC 110442 / TA 4</strain>
    </source>
</reference>
<proteinExistence type="inferred from homology"/>
<accession>C4LBV6</accession>
<evidence type="ECO:0000255" key="1">
    <source>
        <dbReference type="HAMAP-Rule" id="MF_00736"/>
    </source>
</evidence>
<evidence type="ECO:0000305" key="2"/>
<comment type="function">
    <text evidence="1">Forms part of the ribosomal stalk which helps the ribosome interact with GTP-bound translation factors.</text>
</comment>
<comment type="subunit">
    <text evidence="1">Part of the ribosomal stalk of the 50S ribosomal subunit. Interacts with L10 and the large rRNA to form the base of the stalk. L10 forms an elongated spine to which L12 dimers bind in a sequential fashion forming a multimeric L10(L12)X complex.</text>
</comment>
<comment type="PTM">
    <text evidence="1">One or more lysine residues are methylated.</text>
</comment>
<comment type="similarity">
    <text evidence="1">Belongs to the universal ribosomal protein uL11 family.</text>
</comment>
<sequence length="142" mass="14931">MAKKVSAYIKLQVKAGSANPSPPVGPALGQHGVNIMEFCKAFNARTEKLEKGAPTPVVITVYSDRSFTFETKTPPASFLLKKAAGITSGSSKPNKDKVGKVTHAQLLEIAKTKEPDMTGSDLEAKARCIAGSARSMGLVVEG</sequence>
<dbReference type="EMBL" id="CP001616">
    <property type="protein sequence ID" value="ACQ94380.1"/>
    <property type="molecule type" value="Genomic_DNA"/>
</dbReference>
<dbReference type="RefSeq" id="WP_015879829.1">
    <property type="nucleotide sequence ID" value="NC_012691.1"/>
</dbReference>
<dbReference type="SMR" id="C4LBV6"/>
<dbReference type="STRING" id="595494.Tola_2787"/>
<dbReference type="KEGG" id="tau:Tola_2787"/>
<dbReference type="eggNOG" id="COG0080">
    <property type="taxonomic scope" value="Bacteria"/>
</dbReference>
<dbReference type="HOGENOM" id="CLU_074237_2_0_6"/>
<dbReference type="OrthoDB" id="9802408at2"/>
<dbReference type="Proteomes" id="UP000009073">
    <property type="component" value="Chromosome"/>
</dbReference>
<dbReference type="GO" id="GO:0022625">
    <property type="term" value="C:cytosolic large ribosomal subunit"/>
    <property type="evidence" value="ECO:0007669"/>
    <property type="project" value="TreeGrafter"/>
</dbReference>
<dbReference type="GO" id="GO:0070180">
    <property type="term" value="F:large ribosomal subunit rRNA binding"/>
    <property type="evidence" value="ECO:0007669"/>
    <property type="project" value="UniProtKB-UniRule"/>
</dbReference>
<dbReference type="GO" id="GO:0003735">
    <property type="term" value="F:structural constituent of ribosome"/>
    <property type="evidence" value="ECO:0007669"/>
    <property type="project" value="InterPro"/>
</dbReference>
<dbReference type="GO" id="GO:0006412">
    <property type="term" value="P:translation"/>
    <property type="evidence" value="ECO:0007669"/>
    <property type="project" value="UniProtKB-UniRule"/>
</dbReference>
<dbReference type="CDD" id="cd00349">
    <property type="entry name" value="Ribosomal_L11"/>
    <property type="match status" value="1"/>
</dbReference>
<dbReference type="FunFam" id="1.10.10.250:FF:000001">
    <property type="entry name" value="50S ribosomal protein L11"/>
    <property type="match status" value="1"/>
</dbReference>
<dbReference type="FunFam" id="3.30.1550.10:FF:000001">
    <property type="entry name" value="50S ribosomal protein L11"/>
    <property type="match status" value="1"/>
</dbReference>
<dbReference type="Gene3D" id="1.10.10.250">
    <property type="entry name" value="Ribosomal protein L11, C-terminal domain"/>
    <property type="match status" value="1"/>
</dbReference>
<dbReference type="Gene3D" id="3.30.1550.10">
    <property type="entry name" value="Ribosomal protein L11/L12, N-terminal domain"/>
    <property type="match status" value="1"/>
</dbReference>
<dbReference type="HAMAP" id="MF_00736">
    <property type="entry name" value="Ribosomal_uL11"/>
    <property type="match status" value="1"/>
</dbReference>
<dbReference type="InterPro" id="IPR000911">
    <property type="entry name" value="Ribosomal_uL11"/>
</dbReference>
<dbReference type="InterPro" id="IPR006519">
    <property type="entry name" value="Ribosomal_uL11_bac-typ"/>
</dbReference>
<dbReference type="InterPro" id="IPR020783">
    <property type="entry name" value="Ribosomal_uL11_C"/>
</dbReference>
<dbReference type="InterPro" id="IPR036769">
    <property type="entry name" value="Ribosomal_uL11_C_sf"/>
</dbReference>
<dbReference type="InterPro" id="IPR020785">
    <property type="entry name" value="Ribosomal_uL11_CS"/>
</dbReference>
<dbReference type="InterPro" id="IPR020784">
    <property type="entry name" value="Ribosomal_uL11_N"/>
</dbReference>
<dbReference type="InterPro" id="IPR036796">
    <property type="entry name" value="Ribosomal_uL11_N_sf"/>
</dbReference>
<dbReference type="NCBIfam" id="TIGR01632">
    <property type="entry name" value="L11_bact"/>
    <property type="match status" value="1"/>
</dbReference>
<dbReference type="PANTHER" id="PTHR11661">
    <property type="entry name" value="60S RIBOSOMAL PROTEIN L12"/>
    <property type="match status" value="1"/>
</dbReference>
<dbReference type="PANTHER" id="PTHR11661:SF1">
    <property type="entry name" value="LARGE RIBOSOMAL SUBUNIT PROTEIN UL11M"/>
    <property type="match status" value="1"/>
</dbReference>
<dbReference type="Pfam" id="PF00298">
    <property type="entry name" value="Ribosomal_L11"/>
    <property type="match status" value="1"/>
</dbReference>
<dbReference type="Pfam" id="PF03946">
    <property type="entry name" value="Ribosomal_L11_N"/>
    <property type="match status" value="1"/>
</dbReference>
<dbReference type="SMART" id="SM00649">
    <property type="entry name" value="RL11"/>
    <property type="match status" value="1"/>
</dbReference>
<dbReference type="SUPFAM" id="SSF54747">
    <property type="entry name" value="Ribosomal L11/L12e N-terminal domain"/>
    <property type="match status" value="1"/>
</dbReference>
<dbReference type="SUPFAM" id="SSF46906">
    <property type="entry name" value="Ribosomal protein L11, C-terminal domain"/>
    <property type="match status" value="1"/>
</dbReference>
<dbReference type="PROSITE" id="PS00359">
    <property type="entry name" value="RIBOSOMAL_L11"/>
    <property type="match status" value="1"/>
</dbReference>
<keyword id="KW-0488">Methylation</keyword>
<keyword id="KW-1185">Reference proteome</keyword>
<keyword id="KW-0687">Ribonucleoprotein</keyword>
<keyword id="KW-0689">Ribosomal protein</keyword>
<keyword id="KW-0694">RNA-binding</keyword>
<keyword id="KW-0699">rRNA-binding</keyword>
<organism>
    <name type="scientific">Tolumonas auensis (strain DSM 9187 / NBRC 110442 / TA 4)</name>
    <dbReference type="NCBI Taxonomy" id="595494"/>
    <lineage>
        <taxon>Bacteria</taxon>
        <taxon>Pseudomonadati</taxon>
        <taxon>Pseudomonadota</taxon>
        <taxon>Gammaproteobacteria</taxon>
        <taxon>Aeromonadales</taxon>
        <taxon>Aeromonadaceae</taxon>
        <taxon>Tolumonas</taxon>
    </lineage>
</organism>
<feature type="chain" id="PRO_1000212796" description="Large ribosomal subunit protein uL11">
    <location>
        <begin position="1"/>
        <end position="142"/>
    </location>
</feature>
<gene>
    <name evidence="1" type="primary">rplK</name>
    <name type="ordered locus">Tola_2787</name>
</gene>